<sequence>MAPVPEPINEMMAYYSDENELLFEADGPKQMKSCIQHLDLGSVEVGNIQLQISHQLYNKSFRQVVSVIVAMEKLRNSAYAHVFHDDDLRNVLSFIFEEEPVIFETSSDEFLCDAAVQSVNCKLQDREQNSLVLASPCVLKALHLLSQEMSREVVFCMSFVQAEERDNKIPVALGIRDKNQYLSCVKKGDTPTLQLEEVDPKVYPKRNMEKRFVFYKTEIKDTVEFESVLYPNWYISTSHPEEKPVFLGHFRGGQDITDFRMETLSP</sequence>
<gene>
    <name type="primary">IL1B</name>
</gene>
<name>IL1B_CEREL</name>
<feature type="propeptide" id="PRO_0000015291" evidence="1">
    <location>
        <begin position="1"/>
        <end position="113"/>
    </location>
</feature>
<feature type="chain" id="PRO_0000015292" description="Interleukin-1 beta">
    <location>
        <begin position="114"/>
        <end position="266"/>
    </location>
</feature>
<feature type="site" description="Important for interaction with integrin" evidence="2">
    <location>
        <position position="168"/>
    </location>
</feature>
<feature type="site" description="Important for interaction with integrin" evidence="2">
    <location>
        <position position="178"/>
    </location>
</feature>
<feature type="site" description="Important for interaction with integrin" evidence="2">
    <location>
        <position position="187"/>
    </location>
</feature>
<feature type="site" description="Important for interaction with integrin" evidence="2">
    <location>
        <position position="201"/>
    </location>
</feature>
<organism>
    <name type="scientific">Cervus elaphus</name>
    <name type="common">Red deer</name>
    <dbReference type="NCBI Taxonomy" id="9860"/>
    <lineage>
        <taxon>Eukaryota</taxon>
        <taxon>Metazoa</taxon>
        <taxon>Chordata</taxon>
        <taxon>Craniata</taxon>
        <taxon>Vertebrata</taxon>
        <taxon>Euteleostomi</taxon>
        <taxon>Mammalia</taxon>
        <taxon>Eutheria</taxon>
        <taxon>Laurasiatheria</taxon>
        <taxon>Artiodactyla</taxon>
        <taxon>Ruminantia</taxon>
        <taxon>Pecora</taxon>
        <taxon>Cervidae</taxon>
        <taxon>Cervinae</taxon>
        <taxon>Cervus</taxon>
    </lineage>
</organism>
<accession>P51745</accession>
<comment type="function">
    <text evidence="2">Potent pro-inflammatory cytokine. Initially discovered as the major endogenous pyrogen, induces prostaglandin synthesis, neutrophil influx and activation, T-cell activation and cytokine production, B-cell activation and antibody production, and fibroblast proliferation and collagen production. Promotes Th17 differentiation of T-cells. Synergizes with IL12/interleukin-12 to induce IFNG synthesis from T-helper 1 (Th1) cells. Plays a role in angiogenesis by inducing VEGF production synergistically with TNF and IL6. Involved in transduction of inflammation downstream of pyroptosis: its mature form is specifically released in the extracellular milieu by passing through the gasdermin-D (GSDMD) pore.</text>
</comment>
<comment type="subunit">
    <text evidence="2">Monomer. In its precursor form, weakly interacts with full-length MEFV; the mature cytokine does not interact at all. Interacts with integrins ITGAV:ITGBV and ITGA5:ITGB1; integrin-binding is required for IL1B signaling. Interacts with cargo receptor TMED10; the interaction is direct and is required for the secretion of IL1B mature form. Interacts with HSP90AB1; the interaction facilitates cargo translocation into the ERGIC. Interacts with HSP90B1; the interaction facilitates cargo translocation into the ERGIC.</text>
</comment>
<comment type="subcellular location">
    <subcellularLocation>
        <location evidence="2">Cytoplasm</location>
        <location evidence="2">Cytosol</location>
    </subcellularLocation>
    <subcellularLocation>
        <location evidence="2">Secreted</location>
    </subcellularLocation>
    <subcellularLocation>
        <location evidence="2">Lysosome</location>
    </subcellularLocation>
    <subcellularLocation>
        <location evidence="3">Secreted</location>
        <location evidence="3">Extracellular exosome</location>
    </subcellularLocation>
    <text evidence="2">The precursor is cytosolic. In response to inflammasome-activating signals, such as ATP for NLRP3 inflammasome or bacterial flagellin for NLRC4 inflammasome, cleaved and secreted. Mature form is secreted and released in the extracellular milieu by passing through the gasdermin-D (GSDMD) pore. In contrast, the precursor form is not released, due to the presence of an acidic region that is proteolytically removed by CASP1 during maturation. The secretion is dependent on protein unfolding and facilitated by the cargo receptor TMED10.</text>
</comment>
<comment type="miscellaneous">
    <text evidence="1">IL1B production occurs in 2 steps, each being controlled by different stimuli. First, inflammatory signals, such as LPS, stimulate the synthesis and promote the accumulation of cytosolic stores of pro-IL1B (priming). Then additional signals are required for inflammasome assembly, leading to CASP1 activation, pro-IL1B processing and eventually secretion of the active cytokine. IL1B processing and secretion are temporarily associated.</text>
</comment>
<comment type="similarity">
    <text evidence="4">Belongs to the IL-1 family.</text>
</comment>
<evidence type="ECO:0000250" key="1"/>
<evidence type="ECO:0000250" key="2">
    <source>
        <dbReference type="UniProtKB" id="P01584"/>
    </source>
</evidence>
<evidence type="ECO:0000250" key="3">
    <source>
        <dbReference type="UniProtKB" id="P10749"/>
    </source>
</evidence>
<evidence type="ECO:0000305" key="4"/>
<proteinExistence type="evidence at transcript level"/>
<reference key="1">
    <citation type="submission" date="1995-03" db="EMBL/GenBank/DDBJ databases">
        <authorList>
            <person name="Lockhart E.A."/>
        </authorList>
    </citation>
    <scope>NUCLEOTIDE SEQUENCE [MRNA]</scope>
</reference>
<dbReference type="EMBL" id="U20500">
    <property type="protein sequence ID" value="AAA62234.1"/>
    <property type="molecule type" value="mRNA"/>
</dbReference>
<dbReference type="SMR" id="P51745"/>
<dbReference type="GO" id="GO:0005829">
    <property type="term" value="C:cytosol"/>
    <property type="evidence" value="ECO:0007669"/>
    <property type="project" value="UniProtKB-SubCell"/>
</dbReference>
<dbReference type="GO" id="GO:0005615">
    <property type="term" value="C:extracellular space"/>
    <property type="evidence" value="ECO:0007669"/>
    <property type="project" value="UniProtKB-KW"/>
</dbReference>
<dbReference type="GO" id="GO:0005764">
    <property type="term" value="C:lysosome"/>
    <property type="evidence" value="ECO:0007669"/>
    <property type="project" value="UniProtKB-SubCell"/>
</dbReference>
<dbReference type="GO" id="GO:0005125">
    <property type="term" value="F:cytokine activity"/>
    <property type="evidence" value="ECO:0007669"/>
    <property type="project" value="UniProtKB-KW"/>
</dbReference>
<dbReference type="GO" id="GO:0005178">
    <property type="term" value="F:integrin binding"/>
    <property type="evidence" value="ECO:0000250"/>
    <property type="project" value="UniProtKB"/>
</dbReference>
<dbReference type="GO" id="GO:0005149">
    <property type="term" value="F:interleukin-1 receptor binding"/>
    <property type="evidence" value="ECO:0007669"/>
    <property type="project" value="InterPro"/>
</dbReference>
<dbReference type="GO" id="GO:0071222">
    <property type="term" value="P:cellular response to lipopolysaccharide"/>
    <property type="evidence" value="ECO:0007669"/>
    <property type="project" value="TreeGrafter"/>
</dbReference>
<dbReference type="GO" id="GO:0019221">
    <property type="term" value="P:cytokine-mediated signaling pathway"/>
    <property type="evidence" value="ECO:0007669"/>
    <property type="project" value="TreeGrafter"/>
</dbReference>
<dbReference type="GO" id="GO:0001660">
    <property type="term" value="P:fever generation"/>
    <property type="evidence" value="ECO:0007669"/>
    <property type="project" value="UniProtKB-KW"/>
</dbReference>
<dbReference type="GO" id="GO:0006955">
    <property type="term" value="P:immune response"/>
    <property type="evidence" value="ECO:0007669"/>
    <property type="project" value="InterPro"/>
</dbReference>
<dbReference type="GO" id="GO:0051781">
    <property type="term" value="P:positive regulation of cell division"/>
    <property type="evidence" value="ECO:0007669"/>
    <property type="project" value="UniProtKB-KW"/>
</dbReference>
<dbReference type="GO" id="GO:0033092">
    <property type="term" value="P:positive regulation of immature T cell proliferation in thymus"/>
    <property type="evidence" value="ECO:0007669"/>
    <property type="project" value="TreeGrafter"/>
</dbReference>
<dbReference type="GO" id="GO:2000556">
    <property type="term" value="P:positive regulation of T-helper 1 cell cytokine production"/>
    <property type="evidence" value="ECO:0000250"/>
    <property type="project" value="UniProtKB"/>
</dbReference>
<dbReference type="GO" id="GO:0032729">
    <property type="term" value="P:positive regulation of type II interferon production"/>
    <property type="evidence" value="ECO:0000250"/>
    <property type="project" value="UniProtKB"/>
</dbReference>
<dbReference type="GO" id="GO:0010573">
    <property type="term" value="P:vascular endothelial growth factor production"/>
    <property type="evidence" value="ECO:0000250"/>
    <property type="project" value="UniProtKB"/>
</dbReference>
<dbReference type="CDD" id="cd23296">
    <property type="entry name" value="beta-trefoil_IL1B"/>
    <property type="match status" value="1"/>
</dbReference>
<dbReference type="FunFam" id="2.80.10.50:FF:000027">
    <property type="entry name" value="Interleukin-1 beta"/>
    <property type="match status" value="1"/>
</dbReference>
<dbReference type="Gene3D" id="2.80.10.50">
    <property type="match status" value="1"/>
</dbReference>
<dbReference type="InterPro" id="IPR020877">
    <property type="entry name" value="IL-1_CS"/>
</dbReference>
<dbReference type="InterPro" id="IPR000975">
    <property type="entry name" value="IL-1_fam"/>
</dbReference>
<dbReference type="InterPro" id="IPR003502">
    <property type="entry name" value="IL-1_propep"/>
</dbReference>
<dbReference type="InterPro" id="IPR008996">
    <property type="entry name" value="IL1/FGF"/>
</dbReference>
<dbReference type="PANTHER" id="PTHR10078:SF30">
    <property type="entry name" value="INTERLEUKIN-1 BETA"/>
    <property type="match status" value="1"/>
</dbReference>
<dbReference type="PANTHER" id="PTHR10078">
    <property type="entry name" value="INTERLEUKIN-1 FAMILY MEMBER"/>
    <property type="match status" value="1"/>
</dbReference>
<dbReference type="Pfam" id="PF00340">
    <property type="entry name" value="IL1"/>
    <property type="match status" value="1"/>
</dbReference>
<dbReference type="Pfam" id="PF02394">
    <property type="entry name" value="IL1_propep"/>
    <property type="match status" value="1"/>
</dbReference>
<dbReference type="PRINTS" id="PR00262">
    <property type="entry name" value="IL1HBGF"/>
</dbReference>
<dbReference type="PRINTS" id="PR00264">
    <property type="entry name" value="INTERLEUKIN1"/>
</dbReference>
<dbReference type="PRINTS" id="PR01359">
    <property type="entry name" value="INTRLEUKIN1B"/>
</dbReference>
<dbReference type="PRINTS" id="PR01357">
    <property type="entry name" value="INTRLEUKN1AB"/>
</dbReference>
<dbReference type="SMART" id="SM00125">
    <property type="entry name" value="IL1"/>
    <property type="match status" value="1"/>
</dbReference>
<dbReference type="SUPFAM" id="SSF50353">
    <property type="entry name" value="Cytokine"/>
    <property type="match status" value="1"/>
</dbReference>
<dbReference type="PROSITE" id="PS00253">
    <property type="entry name" value="INTERLEUKIN_1"/>
    <property type="match status" value="1"/>
</dbReference>
<keyword id="KW-0202">Cytokine</keyword>
<keyword id="KW-0963">Cytoplasm</keyword>
<keyword id="KW-0395">Inflammatory response</keyword>
<keyword id="KW-0458">Lysosome</keyword>
<keyword id="KW-0497">Mitogen</keyword>
<keyword id="KW-0666">Pyrogen</keyword>
<keyword id="KW-0964">Secreted</keyword>
<protein>
    <recommendedName>
        <fullName>Interleukin-1 beta</fullName>
        <shortName>IL-1 beta</shortName>
    </recommendedName>
</protein>